<feature type="chain" id="PRO_0000452810" description="Unique GC organizer UGO">
    <location>
        <begin position="1"/>
        <end position="2122"/>
    </location>
</feature>
<feature type="transmembrane region" description="Helical" evidence="1">
    <location>
        <begin position="19"/>
        <end position="39"/>
    </location>
</feature>
<feature type="transmembrane region" description="Helical" evidence="1">
    <location>
        <begin position="50"/>
        <end position="70"/>
    </location>
</feature>
<feature type="transmembrane region" description="Helical" evidence="1">
    <location>
        <begin position="82"/>
        <end position="102"/>
    </location>
</feature>
<feature type="transmembrane region" description="Helical" evidence="1">
    <location>
        <begin position="115"/>
        <end position="135"/>
    </location>
</feature>
<feature type="transmembrane region" description="Helical" evidence="1">
    <location>
        <begin position="145"/>
        <end position="165"/>
    </location>
</feature>
<feature type="transmembrane region" description="Helical" evidence="1">
    <location>
        <begin position="1859"/>
        <end position="1879"/>
    </location>
</feature>
<feature type="transmembrane region" description="Helical" evidence="1">
    <location>
        <begin position="1956"/>
        <end position="1976"/>
    </location>
</feature>
<feature type="transmembrane region" description="Helical" evidence="1">
    <location>
        <begin position="1989"/>
        <end position="2009"/>
    </location>
</feature>
<feature type="transmembrane region" description="Helical" evidence="1">
    <location>
        <begin position="2017"/>
        <end position="2037"/>
    </location>
</feature>
<feature type="transmembrane region" description="Helical" evidence="1">
    <location>
        <begin position="2040"/>
        <end position="2060"/>
    </location>
</feature>
<feature type="region of interest" description="Disordered" evidence="3">
    <location>
        <begin position="337"/>
        <end position="403"/>
    </location>
</feature>
<feature type="region of interest" description="Disordered" evidence="3">
    <location>
        <begin position="422"/>
        <end position="532"/>
    </location>
</feature>
<feature type="region of interest" description="Disordered" evidence="3">
    <location>
        <begin position="565"/>
        <end position="591"/>
    </location>
</feature>
<feature type="region of interest" description="Disordered" evidence="3">
    <location>
        <begin position="627"/>
        <end position="762"/>
    </location>
</feature>
<feature type="region of interest" description="Disordered" evidence="3">
    <location>
        <begin position="785"/>
        <end position="815"/>
    </location>
</feature>
<feature type="region of interest" description="Disordered" evidence="3">
    <location>
        <begin position="848"/>
        <end position="870"/>
    </location>
</feature>
<feature type="region of interest" description="Disordered" evidence="3">
    <location>
        <begin position="903"/>
        <end position="949"/>
    </location>
</feature>
<feature type="region of interest" description="Disordered" evidence="3">
    <location>
        <begin position="999"/>
        <end position="1046"/>
    </location>
</feature>
<feature type="region of interest" description="Disordered" evidence="3">
    <location>
        <begin position="1068"/>
        <end position="1308"/>
    </location>
</feature>
<feature type="region of interest" description="Disordered" evidence="3">
    <location>
        <begin position="1328"/>
        <end position="1368"/>
    </location>
</feature>
<feature type="region of interest" description="Disordered" evidence="3">
    <location>
        <begin position="1515"/>
        <end position="1540"/>
    </location>
</feature>
<feature type="region of interest" description="Disordered" evidence="3">
    <location>
        <begin position="1560"/>
        <end position="1608"/>
    </location>
</feature>
<feature type="region of interest" description="Disordered" evidence="3">
    <location>
        <begin position="1639"/>
        <end position="1727"/>
    </location>
</feature>
<feature type="region of interest" description="Disordered" evidence="3">
    <location>
        <begin position="2102"/>
        <end position="2122"/>
    </location>
</feature>
<feature type="compositionally biased region" description="Polar residues" evidence="3">
    <location>
        <begin position="363"/>
        <end position="374"/>
    </location>
</feature>
<feature type="compositionally biased region" description="Basic and acidic residues" evidence="3">
    <location>
        <begin position="503"/>
        <end position="525"/>
    </location>
</feature>
<feature type="compositionally biased region" description="Basic and acidic residues" evidence="3">
    <location>
        <begin position="565"/>
        <end position="585"/>
    </location>
</feature>
<feature type="compositionally biased region" description="Basic and acidic residues" evidence="3">
    <location>
        <begin position="632"/>
        <end position="645"/>
    </location>
</feature>
<feature type="compositionally biased region" description="Basic residues" evidence="3">
    <location>
        <begin position="672"/>
        <end position="687"/>
    </location>
</feature>
<feature type="compositionally biased region" description="Low complexity" evidence="3">
    <location>
        <begin position="690"/>
        <end position="699"/>
    </location>
</feature>
<feature type="compositionally biased region" description="Acidic residues" evidence="3">
    <location>
        <begin position="707"/>
        <end position="720"/>
    </location>
</feature>
<feature type="compositionally biased region" description="Basic residues" evidence="3">
    <location>
        <begin position="725"/>
        <end position="735"/>
    </location>
</feature>
<feature type="compositionally biased region" description="Low complexity" evidence="3">
    <location>
        <begin position="741"/>
        <end position="750"/>
    </location>
</feature>
<feature type="compositionally biased region" description="Basic and acidic residues" evidence="3">
    <location>
        <begin position="751"/>
        <end position="760"/>
    </location>
</feature>
<feature type="compositionally biased region" description="Basic residues" evidence="3">
    <location>
        <begin position="848"/>
        <end position="860"/>
    </location>
</feature>
<feature type="compositionally biased region" description="Polar residues" evidence="3">
    <location>
        <begin position="999"/>
        <end position="1011"/>
    </location>
</feature>
<feature type="compositionally biased region" description="Polar residues" evidence="3">
    <location>
        <begin position="1072"/>
        <end position="1097"/>
    </location>
</feature>
<feature type="compositionally biased region" description="Basic and acidic residues" evidence="3">
    <location>
        <begin position="1220"/>
        <end position="1261"/>
    </location>
</feature>
<feature type="compositionally biased region" description="Basic residues" evidence="3">
    <location>
        <begin position="1262"/>
        <end position="1276"/>
    </location>
</feature>
<feature type="compositionally biased region" description="Basic and acidic residues" evidence="3">
    <location>
        <begin position="1277"/>
        <end position="1289"/>
    </location>
</feature>
<feature type="compositionally biased region" description="Basic and acidic residues" evidence="3">
    <location>
        <begin position="1345"/>
        <end position="1359"/>
    </location>
</feature>
<feature type="compositionally biased region" description="Polar residues" evidence="3">
    <location>
        <begin position="1515"/>
        <end position="1527"/>
    </location>
</feature>
<feature type="compositionally biased region" description="Low complexity" evidence="3">
    <location>
        <begin position="1528"/>
        <end position="1540"/>
    </location>
</feature>
<feature type="compositionally biased region" description="Low complexity" evidence="3">
    <location>
        <begin position="1597"/>
        <end position="1608"/>
    </location>
</feature>
<feature type="compositionally biased region" description="Polar residues" evidence="3">
    <location>
        <begin position="1684"/>
        <end position="1693"/>
    </location>
</feature>
<feature type="glycosylation site" description="N-linked (GlcNAc...) asparagine" evidence="2">
    <location>
        <position position="762"/>
    </location>
</feature>
<feature type="glycosylation site" description="N-linked (GlcNAc...) asparagine" evidence="2">
    <location>
        <position position="1000"/>
    </location>
</feature>
<feature type="glycosylation site" description="N-linked (GlcNAc...) asparagine" evidence="2">
    <location>
        <position position="1165"/>
    </location>
</feature>
<feature type="glycosylation site" description="N-linked (GlcNAc...) asparagine" evidence="2">
    <location>
        <position position="1516"/>
    </location>
</feature>
<proteinExistence type="evidence at protein level"/>
<comment type="function">
    <text evidence="4">In tachyzoites, required for the cellular trafficking of guanylate cyclase GC to the cell membrane and for GC guanylate cyclase activity.</text>
</comment>
<comment type="subunit">
    <text evidence="4">Interacts with guanylate cyclase GC; the interaction regulates guanylate cyclase GC trafficking and catalytic activity.</text>
</comment>
<comment type="subcellular location">
    <subcellularLocation>
        <location evidence="7">Cell membrane</location>
        <topology evidence="1">Multi-pass membrane protein</topology>
    </subcellularLocation>
    <text evidence="4">In intracellular tachyzoites, localizes to the apical cap, to the cytoplasm in disperse foci and to the residual body.</text>
</comment>
<comment type="disruption phenotype">
    <text evidence="4">Conditional knockout in tachyzoites severely impairs lytic parasite growth in host cells (PubMed:30742070). Guanylate cyclase GC is unstable and remains trapped along the secretory pathway (PubMed:30742070). Tachyzoite natural and induced egress, motility and invasion are impaired (PubMed:30742070). Loss of microneme secretion in response to phosphatidic acid or a decrease in vacuolar pH (PubMed:30742070).</text>
</comment>
<accession>S7UQV8</accession>
<protein>
    <recommendedName>
        <fullName evidence="5">Unique GC organizer UGO</fullName>
    </recommendedName>
</protein>
<name>UGO_TOXGG</name>
<reference evidence="9" key="1">
    <citation type="submission" date="2013-05" db="EMBL/GenBank/DDBJ databases">
        <authorList>
            <person name="Sibley D."/>
            <person name="Venepally P."/>
            <person name="Karamycheva S."/>
            <person name="Hadjithomas M."/>
            <person name="Khan A."/>
            <person name="Brunk B."/>
            <person name="Roos D."/>
            <person name="Caler E."/>
            <person name="Lorenzi H."/>
        </authorList>
    </citation>
    <scope>NUCLEOTIDE SEQUENCE [LARGE SCALE GENOMIC DNA]</scope>
    <source>
        <strain evidence="9">ATCC 50853 / GT1</strain>
    </source>
</reference>
<reference evidence="6" key="2">
    <citation type="journal article" date="2019" name="Nat. Microbiol.">
        <title>Phosphatidic acid governs natural egress in Toxoplasma gondii via a guanylate cyclase receptor platform.</title>
        <authorList>
            <person name="Bisio H."/>
            <person name="Lunghi M."/>
            <person name="Brochet M."/>
            <person name="Soldati-Favre D."/>
        </authorList>
    </citation>
    <scope>FUNCTION</scope>
    <scope>INTERACTION WITH GC</scope>
    <scope>SUBCELLULAR LOCATION</scope>
    <scope>DISRUPTION PHENOTYPE</scope>
</reference>
<organism evidence="9">
    <name type="scientific">Toxoplasma gondii (strain ATCC 50853 / GT1)</name>
    <dbReference type="NCBI Taxonomy" id="507601"/>
    <lineage>
        <taxon>Eukaryota</taxon>
        <taxon>Sar</taxon>
        <taxon>Alveolata</taxon>
        <taxon>Apicomplexa</taxon>
        <taxon>Conoidasida</taxon>
        <taxon>Coccidia</taxon>
        <taxon>Eucoccidiorida</taxon>
        <taxon>Eimeriorina</taxon>
        <taxon>Sarcocystidae</taxon>
        <taxon>Toxoplasma</taxon>
    </lineage>
</organism>
<gene>
    <name evidence="5" type="primary">UGO</name>
    <name evidence="8" type="ORF">TGGT1_238390</name>
</gene>
<sequence>MRMQWFLLRHAYFIKGEDFAVAVALLDLALYVLIGTNSLQFLDQSPEKALFGMITSALIFIIALCGFVIVRMFRTSKYKIETYIMPVLIICNIASVFYMQLINKLVGFMTLQLPVLTFLITGYPYVWLVAFVLIGMGGGLIAQSVVCSVSLGSSCPPSVWVDVGLYALQLISGSVAYFTVYELGILIVRYKRHPARYLDAFSDLTALDTIVFSPVFGLGGETARQVQVNQLMAPEKPNLDGLTFLRSASQVSQTTNRIVSRAFYHANTPPHSSSRDALPADKALGAERSDRAGSAVFSPNTLGPLGAPSAGLRDFGPGRPVPGASVVVPKSLKQHAAALHAGANSPHGSPPLQPHGALPGAPRSNTLRGCSGQVSLVPREEESDPACGSLRASVESKATHRSAATLSACESKSRSGRVAGLFRGLSKRPGGPDCEEAAPAEPATSLGSKELGRKKTAGSKAQSSVPILLPRPQSIEETTWRGLASGDLSKDTPVASLASRRNLRMDEQSGDADKASSDVSRDPAKKGAGPFVAEAPVHTAVLPSSSFHSEFPLSRRDSGKELLSDLRESRERTARAASHDTHAAADDSGLQGDPALAAEARVRTALHYHRRWFFSQLFHFRRARRRHRRGAGARDGELVFERGEPDEVESEESCDDSRSRPRETASLSHFSRLSRSRRHKTRTYRRGRSSDGTTAGTSDSDSHGESLEDEGSDSGQESESEESRRRRMRSSRNRRRETSSEDSSSGTSVRSEGRHCREGRANSSVFSSGIRRYFSFFSAATRCAHAASSEEERPVRPARHSWRRGSGDSRECSASTSGVSEACEHSSDASWASSSSLCGSCEKRSIRMSRRRRREGKSRPHASSVSRAERHRGHVSVDLAPLLPSRLFFDTFLNSVRRAERLSKEGRLPASVSRQSSETRGSRTAFLNGDKGCSPTSEAPERSFPASANEVSFRRNEGWERYYDMLLPSLPPFPSARPLYVKPRKNSQAFQNVAVSVSRNETEMTASSPATSFDGPRAVSLSPEGRGARESSDGGGATAPSDLHSRPARAKSLVAAMLHTYPTCPQPPSDLSLFTTPPASPSSLNEVQASRSSSARITSVELGALGKQQGEAAPAGTDAVEEDRDATEDARGSLSSPTGASRRGDRCRRSWSSCEARSSVEMKPNLSIRDARASESPLQSAAPLLSEEKKSRKAQSCAQCRRCGRSRTRLQPSGRLGSSSREDLVGEADSHVSPEKEVFVSSRREKREEQVPRSRREERRDRRGRRWRRGRRRRKARECSETEERRDSSSEWSGTQYSSQERRSHEAVGGVAQLTPICVDDECGKGDAGLSPLLRSEAEESEGEGDMRERQIYETHSDGDVEELSEEEREDRGRSWLRWLFPWGAGEGQGGEKNRRKRSRSEGRREREFISAERRYLEHHRRSRVSSVADSRWGSGSEASADAYPALRRRKGSRVYPVSKPQWFQPSGLTACSSKNSWLAVPPDISLVSAAPALPTPSPSSLSFSGLDQELDCDANSSTAVSSSLPDSTAWQGSGAAASASSPSLRASVDAHFAEAELHAAEHSDGVSVSPRNSPGALSARPMSAAGMPNPDSGIATQTPQTPQTPHTQRPLLLAQSLVAASGKPLPPTRADFEAQRSQGLGDLSQKTPRVFSPQGLGRSQGYGPGGSSYALDSSREAGPSGRLSATPSTRLQGSGGPAFPHSSFPQAIGAAGTPTAPSRDSRTFFGDTGAARASRAGLSGRLASRGTALAPKGTRRLKSGYSVGAADAKDKQKGKVLRYQLVQKFHDRLPWWVARIIVYTDAALENCRRRRRLMQRATWKTKVAMPVRNMLGLFSDEKIETWYVQWLNAFNAKYYPRVAWLLFLICFYATAFHGLLRLRGFIENYPLCIDAVRASPLGEAGFLILVAVRFASQPILSFLLLLPLLRHSGSRLIDFLFCSRAPATPLKSYKLYRWMLALSFLQFVYAVFDNTWHLIAEPGSRHVNPLTIIPASPSLEIAAVQTVYILAVRTPTINLIFLLYIITYIIIFFVALPPGVQQVQLFTISMAGWLFTCVGGQLFYTRAFEVNRRRLFCKYVLPYMLYLEEIAAILYSNPQGEYPLDEGSEDEVSMGSGHLVGDRSA</sequence>
<keyword id="KW-1003">Cell membrane</keyword>
<keyword id="KW-0325">Glycoprotein</keyword>
<keyword id="KW-0472">Membrane</keyword>
<keyword id="KW-0812">Transmembrane</keyword>
<keyword id="KW-1133">Transmembrane helix</keyword>
<dbReference type="EMBL" id="AAQM03000188">
    <property type="protein sequence ID" value="EPR60366.1"/>
    <property type="molecule type" value="Genomic_DNA"/>
</dbReference>
<dbReference type="GlyCosmos" id="S7UQV8">
    <property type="glycosylation" value="4 sites, No reported glycans"/>
</dbReference>
<dbReference type="EnsemblProtists" id="EPR60366">
    <property type="protein sequence ID" value="EPR60366"/>
    <property type="gene ID" value="TGGT1_238390"/>
</dbReference>
<dbReference type="VEuPathDB" id="ToxoDB:TGGT1_238390"/>
<dbReference type="OrthoDB" id="4386at5809"/>
<dbReference type="Proteomes" id="UP000005641">
    <property type="component" value="Unassembled WGS sequence"/>
</dbReference>
<dbReference type="GO" id="GO:0016324">
    <property type="term" value="C:apical plasma membrane"/>
    <property type="evidence" value="ECO:0000314"/>
    <property type="project" value="UniProtKB"/>
</dbReference>
<dbReference type="GO" id="GO:0031284">
    <property type="term" value="P:positive regulation of guanylate cyclase activity"/>
    <property type="evidence" value="ECO:0000315"/>
    <property type="project" value="UniProtKB"/>
</dbReference>
<dbReference type="GO" id="GO:0072659">
    <property type="term" value="P:protein localization to plasma membrane"/>
    <property type="evidence" value="ECO:0000315"/>
    <property type="project" value="UniProtKB"/>
</dbReference>
<evidence type="ECO:0000255" key="1"/>
<evidence type="ECO:0000255" key="2">
    <source>
        <dbReference type="PROSITE-ProRule" id="PRU00498"/>
    </source>
</evidence>
<evidence type="ECO:0000256" key="3">
    <source>
        <dbReference type="SAM" id="MobiDB-lite"/>
    </source>
</evidence>
<evidence type="ECO:0000269" key="4">
    <source>
    </source>
</evidence>
<evidence type="ECO:0000303" key="5">
    <source>
    </source>
</evidence>
<evidence type="ECO:0000305" key="6"/>
<evidence type="ECO:0000305" key="7">
    <source>
    </source>
</evidence>
<evidence type="ECO:0000312" key="8">
    <source>
        <dbReference type="EMBL" id="EPR60366.1"/>
    </source>
</evidence>
<evidence type="ECO:0000312" key="9">
    <source>
        <dbReference type="Proteomes" id="UP000005641"/>
    </source>
</evidence>